<keyword id="KW-1185">Reference proteome</keyword>
<evidence type="ECO:0000255" key="1">
    <source>
        <dbReference type="HAMAP-Rule" id="MF_01584"/>
    </source>
</evidence>
<organism>
    <name type="scientific">Aromatoleum aromaticum (strain DSM 19018 / LMG 30748 / EbN1)</name>
    <name type="common">Azoarcus sp. (strain EbN1)</name>
    <dbReference type="NCBI Taxonomy" id="76114"/>
    <lineage>
        <taxon>Bacteria</taxon>
        <taxon>Pseudomonadati</taxon>
        <taxon>Pseudomonadota</taxon>
        <taxon>Betaproteobacteria</taxon>
        <taxon>Rhodocyclales</taxon>
        <taxon>Rhodocyclaceae</taxon>
        <taxon>Aromatoleum</taxon>
    </lineage>
</organism>
<reference key="1">
    <citation type="journal article" date="2005" name="Arch. Microbiol.">
        <title>The genome sequence of an anaerobic aromatic-degrading denitrifying bacterium, strain EbN1.</title>
        <authorList>
            <person name="Rabus R."/>
            <person name="Kube M."/>
            <person name="Heider J."/>
            <person name="Beck A."/>
            <person name="Heitmann K."/>
            <person name="Widdel F."/>
            <person name="Reinhardt R."/>
        </authorList>
    </citation>
    <scope>NUCLEOTIDE SEQUENCE [LARGE SCALE GENOMIC DNA]</scope>
    <source>
        <strain>DSM 19018 / LMG 30748 / EbN1</strain>
    </source>
</reference>
<sequence length="228" mass="25389">MTDHTLADADEGFDLDSVEIRVLGVLMEKAFVTPDNYPLSVNAIVTGSNQLTGRDPVMNLTETEVQEALDRLIARKLVSKRDQASARVGKYEHLVRLRHSLPPPEQAALATLMLRGAQTAGEIRQRSERMHRFDDIAAVDKVLEHLGEKYPPMVAAVPKAPGTKETRYAHLLGGRQAFVQMGEAVASGYGSGGAVRGRTSELEEEVRRLRDEFDVLRSEFEKFRSQFE</sequence>
<gene>
    <name type="ordered locus">AZOSEA09860</name>
    <name type="ORF">ebA1823</name>
</gene>
<dbReference type="EMBL" id="CR555306">
    <property type="protein sequence ID" value="CAI07111.1"/>
    <property type="molecule type" value="Genomic_DNA"/>
</dbReference>
<dbReference type="RefSeq" id="WP_011236836.1">
    <property type="nucleotide sequence ID" value="NC_006513.1"/>
</dbReference>
<dbReference type="SMR" id="Q5P6F0"/>
<dbReference type="STRING" id="76114.ebA1823"/>
<dbReference type="KEGG" id="eba:ebA1823"/>
<dbReference type="eggNOG" id="COG3132">
    <property type="taxonomic scope" value="Bacteria"/>
</dbReference>
<dbReference type="HOGENOM" id="CLU_057831_1_0_4"/>
<dbReference type="OrthoDB" id="9784785at2"/>
<dbReference type="Proteomes" id="UP000006552">
    <property type="component" value="Chromosome"/>
</dbReference>
<dbReference type="Gene3D" id="1.10.10.10">
    <property type="entry name" value="Winged helix-like DNA-binding domain superfamily/Winged helix DNA-binding domain"/>
    <property type="match status" value="2"/>
</dbReference>
<dbReference type="HAMAP" id="MF_01584">
    <property type="entry name" value="UPF0502"/>
    <property type="match status" value="1"/>
</dbReference>
<dbReference type="InterPro" id="IPR007432">
    <property type="entry name" value="DUF480"/>
</dbReference>
<dbReference type="InterPro" id="IPR036388">
    <property type="entry name" value="WH-like_DNA-bd_sf"/>
</dbReference>
<dbReference type="InterPro" id="IPR036390">
    <property type="entry name" value="WH_DNA-bd_sf"/>
</dbReference>
<dbReference type="PANTHER" id="PTHR38768">
    <property type="entry name" value="UPF0502 PROTEIN YCEH"/>
    <property type="match status" value="1"/>
</dbReference>
<dbReference type="PANTHER" id="PTHR38768:SF1">
    <property type="entry name" value="UPF0502 PROTEIN YCEH"/>
    <property type="match status" value="1"/>
</dbReference>
<dbReference type="Pfam" id="PF04337">
    <property type="entry name" value="DUF480"/>
    <property type="match status" value="1"/>
</dbReference>
<dbReference type="SUPFAM" id="SSF46785">
    <property type="entry name" value="Winged helix' DNA-binding domain"/>
    <property type="match status" value="2"/>
</dbReference>
<name>Y986_AROAE</name>
<feature type="chain" id="PRO_0000309371" description="UPF0502 protein AZOSEA09860">
    <location>
        <begin position="1"/>
        <end position="228"/>
    </location>
</feature>
<comment type="similarity">
    <text evidence="1">Belongs to the UPF0502 family.</text>
</comment>
<proteinExistence type="inferred from homology"/>
<accession>Q5P6F0</accession>
<protein>
    <recommendedName>
        <fullName evidence="1">UPF0502 protein AZOSEA09860</fullName>
    </recommendedName>
</protein>